<comment type="function">
    <text evidence="5">Seed storage protein. Accumulates during seed development and is hydrolyzed after germination to provide a carbon and nitrogen source for the developing seedling.</text>
</comment>
<comment type="subunit">
    <text evidence="9">Component of globulins complexes which accumulate in seeds.</text>
</comment>
<comment type="developmental stage">
    <text evidence="5">Increased expression during seed filling, with a maximum between 33 and 38 days after anthesis.</text>
</comment>
<comment type="allergen">
    <text evidence="4">Causes an allergic reaction in human. Lup an 1 is the major lupin allergen.</text>
</comment>
<comment type="miscellaneous">
    <text evidence="10">The variability of the residues taking part of IgE-binding epitopes might be responsible of the difference in cross-reactivity among legumes.</text>
</comment>
<comment type="similarity">
    <text evidence="8">Belongs to the 7S seed storage protein family.</text>
</comment>
<sequence length="637" mass="75207">MAKMRVRFPMLVLLLGVVFLLAVSIGIAYGEKDVIKNPERPEERQEEERDPRQPPRSRQQEEQEREHRREKERDREPSRGRSESKQSQEEERERRKEHDREREQEQQPQYGRRHEEEEKGEEEEEGQARRQRPQRRREEREQEQGSSSESRRQSGDERRHRHEKREQREEREQEQGSSSGRQSDYGRRQRHEGREQREEREQEQGSSSESHRLRNPYYFSSERFQTRYKNKNGQIRVLERFDQRTNRLENLQNYRIVEFQSRPNTLILPKHSDADYILVVLNGRATITIVNPDKRQAYNLEYGDALRLPAGTTSYILNPDDNQDLRVVKLAIPINNPGKFYDFYPSRTKDQQSYFSGFSKNTLEATFNTHYEEIQRILLGYEDEQEDEEQRREQEQSHQDEGVIVRVSKEQIQELRKHAQSSSRKGKPSESGPFNLRSNEPIYSNKFGNFYEITPDRNPQVQDLDISLIFTEISEGALLLPHYNSKAIFVIVVDEGEGNYELVGIRNQQRQQDEQEVEEVRSYNARLSEGDILVIPAGHPLSINASSNLRLLGFGINADENQRNFLAGSEDNVIRQLDREVKELIFPGSAEDVERLIRNQQQSYFANAQPQQQQQQREKEGRRGRRGPISSILSALY</sequence>
<accession>F5B8W3</accession>
<keyword id="KW-0020">Allergen</keyword>
<keyword id="KW-0325">Glycoprotein</keyword>
<keyword id="KW-0708">Seed storage protein</keyword>
<keyword id="KW-0732">Signal</keyword>
<keyword id="KW-0758">Storage protein</keyword>
<feature type="signal peptide" evidence="1">
    <location>
        <begin position="1"/>
        <end position="30"/>
    </location>
</feature>
<feature type="chain" id="PRO_5003323051" description="Conglutin beta 5" evidence="1">
    <location>
        <begin position="31"/>
        <end position="637"/>
    </location>
</feature>
<feature type="domain" description="Cupin type-1 1" evidence="1">
    <location>
        <begin position="217"/>
        <end position="375"/>
    </location>
</feature>
<feature type="domain" description="Cupin type-1 2" evidence="1">
    <location>
        <begin position="434"/>
        <end position="594"/>
    </location>
</feature>
<feature type="region of interest" description="Disordered" evidence="3">
    <location>
        <begin position="33"/>
        <end position="221"/>
    </location>
</feature>
<feature type="region of interest" description="Disordered" evidence="3">
    <location>
        <begin position="384"/>
        <end position="439"/>
    </location>
</feature>
<feature type="region of interest" description="Disordered" evidence="3">
    <location>
        <begin position="606"/>
        <end position="626"/>
    </location>
</feature>
<feature type="compositionally biased region" description="Basic and acidic residues" evidence="3">
    <location>
        <begin position="33"/>
        <end position="105"/>
    </location>
</feature>
<feature type="compositionally biased region" description="Basic and acidic residues" evidence="3">
    <location>
        <begin position="136"/>
        <end position="174"/>
    </location>
</feature>
<feature type="compositionally biased region" description="Basic and acidic residues" evidence="3">
    <location>
        <begin position="184"/>
        <end position="203"/>
    </location>
</feature>
<feature type="compositionally biased region" description="Basic and acidic residues" evidence="3">
    <location>
        <begin position="389"/>
        <end position="417"/>
    </location>
</feature>
<feature type="compositionally biased region" description="Low complexity" evidence="3">
    <location>
        <begin position="606"/>
        <end position="615"/>
    </location>
</feature>
<feature type="glycosylation site" description="N-linked (GlcNAc...) asparagine" evidence="2">
    <location>
        <position position="544"/>
    </location>
</feature>
<organism>
    <name type="scientific">Lupinus angustifolius</name>
    <name type="common">Narrow-leaved blue lupine</name>
    <dbReference type="NCBI Taxonomy" id="3871"/>
    <lineage>
        <taxon>Eukaryota</taxon>
        <taxon>Viridiplantae</taxon>
        <taxon>Streptophyta</taxon>
        <taxon>Embryophyta</taxon>
        <taxon>Tracheophyta</taxon>
        <taxon>Spermatophyta</taxon>
        <taxon>Magnoliopsida</taxon>
        <taxon>eudicotyledons</taxon>
        <taxon>Gunneridae</taxon>
        <taxon>Pentapetalae</taxon>
        <taxon>rosids</taxon>
        <taxon>fabids</taxon>
        <taxon>Fabales</taxon>
        <taxon>Fabaceae</taxon>
        <taxon>Papilionoideae</taxon>
        <taxon>50 kb inversion clade</taxon>
        <taxon>genistoids sensu lato</taxon>
        <taxon>core genistoids</taxon>
        <taxon>Genisteae</taxon>
        <taxon>Lupinus</taxon>
    </lineage>
</organism>
<proteinExistence type="evidence at protein level"/>
<reference key="1">
    <citation type="journal article" date="2011" name="BMC Plant Biol.">
        <title>Identification and characterisation of seed storage protein transcripts from Lupinus angustifolius.</title>
        <authorList>
            <person name="Foley R.C."/>
            <person name="Gao L.-L."/>
            <person name="Spriggs A."/>
            <person name="Soo L.Y.C."/>
            <person name="Goggin D.E."/>
            <person name="Smith P.M.C."/>
            <person name="Atkins C.A."/>
            <person name="Singh K.B."/>
        </authorList>
    </citation>
    <scope>NUCLEOTIDE SEQUENCE [MRNA]</scope>
    <scope>FUNCTION</scope>
    <scope>DEVELOPMENTAL STAGE</scope>
    <source>
        <strain>cv. Tanjil</strain>
        <tissue>Seed</tissue>
    </source>
</reference>
<reference key="2">
    <citation type="journal article" date="2008" name="J. Agric. Food Chem.">
        <title>Proteomic analysis of lupin seed proteins to identify conglutin Beta as an allergen, Lup an 1.</title>
        <authorList>
            <person name="Goggin D.E."/>
            <person name="Mir G."/>
            <person name="Smith W.B."/>
            <person name="Stuckey M."/>
            <person name="Smith P.M."/>
        </authorList>
    </citation>
    <scope>ALLERGEN</scope>
</reference>
<reference key="3">
    <citation type="journal article" date="2012" name="J. Agric. Food Chem.">
        <title>Release of flavonoids from lupin globulin proteins during digestion in a model system.</title>
        <authorList>
            <person name="Czubinski J."/>
            <person name="Dwiecki K."/>
            <person name="Siger A."/>
            <person name="Kachlicki P."/>
            <person name="Neunert G."/>
            <person name="Lampart-Szczapa E."/>
            <person name="Nogala-Kalucka M."/>
        </authorList>
    </citation>
    <scope>SUBUNIT</scope>
    <source>
        <strain>cv. Zeus</strain>
    </source>
</reference>
<reference key="4">
    <citation type="book" date="2015" name="Bioinformatics and Biomedical Engineering, LNCS 9043">
        <title>Lupin allergy: Uncovering structural features and epitopes of b-conglutin proteins in Lupinus angustifolius L. with a focus on cross-allergenic reactivity to peanut and other legumes.</title>
        <editorList>
            <person name="Ortuno F."/>
            <person name="Rojas I."/>
        </editorList>
        <authorList>
            <person name="Jimenez-Lopez J.C."/>
            <person name="Lima-Cabello E."/>
            <person name="Melser S."/>
            <person name="Foley R.C."/>
            <person name="Singh K.B."/>
        </authorList>
    </citation>
    <scope>3D-STRUCTURE MODELING</scope>
</reference>
<evidence type="ECO:0000255" key="1"/>
<evidence type="ECO:0000255" key="2">
    <source>
        <dbReference type="PROSITE-ProRule" id="PRU00498"/>
    </source>
</evidence>
<evidence type="ECO:0000256" key="3">
    <source>
        <dbReference type="SAM" id="MobiDB-lite"/>
    </source>
</evidence>
<evidence type="ECO:0000269" key="4">
    <source>
    </source>
</evidence>
<evidence type="ECO:0000269" key="5">
    <source>
    </source>
</evidence>
<evidence type="ECO:0000303" key="6">
    <source>
    </source>
</evidence>
<evidence type="ECO:0000303" key="7">
    <source>
    </source>
</evidence>
<evidence type="ECO:0000305" key="8"/>
<evidence type="ECO:0000305" key="9">
    <source>
    </source>
</evidence>
<evidence type="ECO:0000305" key="10">
    <source ref="4"/>
</evidence>
<protein>
    <recommendedName>
        <fullName evidence="7">Conglutin beta 5</fullName>
    </recommendedName>
    <allergenName evidence="6">Lup an 1</allergenName>
</protein>
<gene>
    <name evidence="7" type="primary">BETA5</name>
</gene>
<name>CONB5_LUPAN</name>
<dbReference type="EMBL" id="HQ670413">
    <property type="protein sequence ID" value="AEB33716.1"/>
    <property type="molecule type" value="mRNA"/>
</dbReference>
<dbReference type="RefSeq" id="XP_019459007.1">
    <property type="nucleotide sequence ID" value="XM_019603462.1"/>
</dbReference>
<dbReference type="SMR" id="F5B8W3"/>
<dbReference type="Allergome" id="4015">
    <property type="allergen name" value="Lup an 1"/>
</dbReference>
<dbReference type="GlyCosmos" id="F5B8W3">
    <property type="glycosylation" value="1 site, No reported glycans"/>
</dbReference>
<dbReference type="GeneID" id="109358950"/>
<dbReference type="KEGG" id="lang:109358950"/>
<dbReference type="OrthoDB" id="1425232at2759"/>
<dbReference type="GO" id="GO:0045735">
    <property type="term" value="F:nutrient reservoir activity"/>
    <property type="evidence" value="ECO:0007669"/>
    <property type="project" value="UniProtKB-KW"/>
</dbReference>
<dbReference type="CDD" id="cd02245">
    <property type="entry name" value="cupin_7S_vicilin-like_C"/>
    <property type="match status" value="1"/>
</dbReference>
<dbReference type="CDD" id="cd02244">
    <property type="entry name" value="cupin_7S_vicilin-like_N"/>
    <property type="match status" value="1"/>
</dbReference>
<dbReference type="Gene3D" id="2.60.120.10">
    <property type="entry name" value="Jelly Rolls"/>
    <property type="match status" value="2"/>
</dbReference>
<dbReference type="InterPro" id="IPR006045">
    <property type="entry name" value="Cupin_1"/>
</dbReference>
<dbReference type="InterPro" id="IPR014710">
    <property type="entry name" value="RmlC-like_jellyroll"/>
</dbReference>
<dbReference type="InterPro" id="IPR011051">
    <property type="entry name" value="RmlC_Cupin_sf"/>
</dbReference>
<dbReference type="InterPro" id="IPR050253">
    <property type="entry name" value="Seed_Storage-Functional"/>
</dbReference>
<dbReference type="PANTHER" id="PTHR31189">
    <property type="entry name" value="OS03G0336100 PROTEIN-RELATED"/>
    <property type="match status" value="1"/>
</dbReference>
<dbReference type="PANTHER" id="PTHR31189:SF41">
    <property type="entry name" value="VICILIN C72"/>
    <property type="match status" value="1"/>
</dbReference>
<dbReference type="Pfam" id="PF00190">
    <property type="entry name" value="Cupin_1"/>
    <property type="match status" value="1"/>
</dbReference>
<dbReference type="SMART" id="SM00835">
    <property type="entry name" value="Cupin_1"/>
    <property type="match status" value="2"/>
</dbReference>
<dbReference type="SUPFAM" id="SSF51182">
    <property type="entry name" value="RmlC-like cupins"/>
    <property type="match status" value="2"/>
</dbReference>